<accession>A9KMS8</accession>
<name>SYY_LACP7</name>
<gene>
    <name evidence="1" type="primary">tyrS</name>
    <name type="ordered locus">Cphy_2578</name>
</gene>
<proteinExistence type="inferred from homology"/>
<dbReference type="EC" id="6.1.1.1" evidence="1"/>
<dbReference type="EMBL" id="CP000885">
    <property type="protein sequence ID" value="ABX42939.1"/>
    <property type="molecule type" value="Genomic_DNA"/>
</dbReference>
<dbReference type="RefSeq" id="WP_012200592.1">
    <property type="nucleotide sequence ID" value="NC_010001.1"/>
</dbReference>
<dbReference type="SMR" id="A9KMS8"/>
<dbReference type="STRING" id="357809.Cphy_2578"/>
<dbReference type="KEGG" id="cpy:Cphy_2578"/>
<dbReference type="eggNOG" id="COG0162">
    <property type="taxonomic scope" value="Bacteria"/>
</dbReference>
<dbReference type="HOGENOM" id="CLU_024003_0_3_9"/>
<dbReference type="OrthoDB" id="9804243at2"/>
<dbReference type="Proteomes" id="UP000000370">
    <property type="component" value="Chromosome"/>
</dbReference>
<dbReference type="GO" id="GO:0005829">
    <property type="term" value="C:cytosol"/>
    <property type="evidence" value="ECO:0007669"/>
    <property type="project" value="TreeGrafter"/>
</dbReference>
<dbReference type="GO" id="GO:0005524">
    <property type="term" value="F:ATP binding"/>
    <property type="evidence" value="ECO:0007669"/>
    <property type="project" value="UniProtKB-UniRule"/>
</dbReference>
<dbReference type="GO" id="GO:0003723">
    <property type="term" value="F:RNA binding"/>
    <property type="evidence" value="ECO:0007669"/>
    <property type="project" value="UniProtKB-KW"/>
</dbReference>
<dbReference type="GO" id="GO:0004831">
    <property type="term" value="F:tyrosine-tRNA ligase activity"/>
    <property type="evidence" value="ECO:0007669"/>
    <property type="project" value="UniProtKB-UniRule"/>
</dbReference>
<dbReference type="GO" id="GO:0006437">
    <property type="term" value="P:tyrosyl-tRNA aminoacylation"/>
    <property type="evidence" value="ECO:0007669"/>
    <property type="project" value="UniProtKB-UniRule"/>
</dbReference>
<dbReference type="CDD" id="cd00165">
    <property type="entry name" value="S4"/>
    <property type="match status" value="1"/>
</dbReference>
<dbReference type="CDD" id="cd00805">
    <property type="entry name" value="TyrRS_core"/>
    <property type="match status" value="1"/>
</dbReference>
<dbReference type="FunFam" id="1.10.240.10:FF:000001">
    <property type="entry name" value="Tyrosine--tRNA ligase"/>
    <property type="match status" value="1"/>
</dbReference>
<dbReference type="Gene3D" id="3.40.50.620">
    <property type="entry name" value="HUPs"/>
    <property type="match status" value="1"/>
</dbReference>
<dbReference type="Gene3D" id="3.10.290.10">
    <property type="entry name" value="RNA-binding S4 domain"/>
    <property type="match status" value="1"/>
</dbReference>
<dbReference type="Gene3D" id="1.10.240.10">
    <property type="entry name" value="Tyrosyl-Transfer RNA Synthetase"/>
    <property type="match status" value="1"/>
</dbReference>
<dbReference type="HAMAP" id="MF_02006">
    <property type="entry name" value="Tyr_tRNA_synth_type1"/>
    <property type="match status" value="1"/>
</dbReference>
<dbReference type="InterPro" id="IPR002305">
    <property type="entry name" value="aa-tRNA-synth_Ic"/>
</dbReference>
<dbReference type="InterPro" id="IPR014729">
    <property type="entry name" value="Rossmann-like_a/b/a_fold"/>
</dbReference>
<dbReference type="InterPro" id="IPR036986">
    <property type="entry name" value="S4_RNA-bd_sf"/>
</dbReference>
<dbReference type="InterPro" id="IPR054608">
    <property type="entry name" value="SYY-like_C"/>
</dbReference>
<dbReference type="InterPro" id="IPR002307">
    <property type="entry name" value="Tyr-tRNA-ligase"/>
</dbReference>
<dbReference type="InterPro" id="IPR024088">
    <property type="entry name" value="Tyr-tRNA-ligase_bac-type"/>
</dbReference>
<dbReference type="InterPro" id="IPR024107">
    <property type="entry name" value="Tyr-tRNA-ligase_bac_1"/>
</dbReference>
<dbReference type="NCBIfam" id="TIGR00234">
    <property type="entry name" value="tyrS"/>
    <property type="match status" value="1"/>
</dbReference>
<dbReference type="PANTHER" id="PTHR11766:SF0">
    <property type="entry name" value="TYROSINE--TRNA LIGASE, MITOCHONDRIAL"/>
    <property type="match status" value="1"/>
</dbReference>
<dbReference type="PANTHER" id="PTHR11766">
    <property type="entry name" value="TYROSYL-TRNA SYNTHETASE"/>
    <property type="match status" value="1"/>
</dbReference>
<dbReference type="Pfam" id="PF22421">
    <property type="entry name" value="SYY_C-terminal"/>
    <property type="match status" value="1"/>
</dbReference>
<dbReference type="Pfam" id="PF00579">
    <property type="entry name" value="tRNA-synt_1b"/>
    <property type="match status" value="1"/>
</dbReference>
<dbReference type="PRINTS" id="PR01040">
    <property type="entry name" value="TRNASYNTHTYR"/>
</dbReference>
<dbReference type="SUPFAM" id="SSF55174">
    <property type="entry name" value="Alpha-L RNA-binding motif"/>
    <property type="match status" value="1"/>
</dbReference>
<dbReference type="SUPFAM" id="SSF52374">
    <property type="entry name" value="Nucleotidylyl transferase"/>
    <property type="match status" value="1"/>
</dbReference>
<dbReference type="PROSITE" id="PS50889">
    <property type="entry name" value="S4"/>
    <property type="match status" value="1"/>
</dbReference>
<feature type="chain" id="PRO_1000088583" description="Tyrosine--tRNA ligase">
    <location>
        <begin position="1"/>
        <end position="410"/>
    </location>
</feature>
<feature type="domain" description="S4 RNA-binding" evidence="1">
    <location>
        <begin position="343"/>
        <end position="409"/>
    </location>
</feature>
<feature type="short sequence motif" description="'HIGH' region">
    <location>
        <begin position="41"/>
        <end position="50"/>
    </location>
</feature>
<feature type="short sequence motif" description="'KMSKS' region">
    <location>
        <begin position="229"/>
        <end position="233"/>
    </location>
</feature>
<feature type="binding site" evidence="1">
    <location>
        <position position="36"/>
    </location>
    <ligand>
        <name>L-tyrosine</name>
        <dbReference type="ChEBI" id="CHEBI:58315"/>
    </ligand>
</feature>
<feature type="binding site" evidence="1">
    <location>
        <position position="169"/>
    </location>
    <ligand>
        <name>L-tyrosine</name>
        <dbReference type="ChEBI" id="CHEBI:58315"/>
    </ligand>
</feature>
<feature type="binding site" evidence="1">
    <location>
        <position position="173"/>
    </location>
    <ligand>
        <name>L-tyrosine</name>
        <dbReference type="ChEBI" id="CHEBI:58315"/>
    </ligand>
</feature>
<feature type="binding site" evidence="1">
    <location>
        <position position="232"/>
    </location>
    <ligand>
        <name>ATP</name>
        <dbReference type="ChEBI" id="CHEBI:30616"/>
    </ligand>
</feature>
<sequence length="410" mass="46389">MSENIYDVLLERGFIEQATHEAETKELLGKEKVTFYIGFDATADSLTAGHFLTVMAMMHMQRAGHRPIALLGGGTTMIGDPTGKSDMRSMMTRETIDHNAQCFQEQLSKFIDFSDDKAIIANNADWLLNLNYVEFLREIGVHFSVNKMLTAECYKQRMEKGLTFFEFNYMLMQSYDFWVLYKKYGCKLQLGGNDQWSNILGGVDLIRRKEQAPAFGLTFKLLTTSEGLKMGKTMKGAVWLNPEKTSPYEFYQYWRNIEDVKVEECLGLLTFLPMDEVRRLGALEGAEINHAKEVLAYEITKIVHGEEEAKKAQEAAKSLFAGGVTSEHMPTTTYSSAAFEEGIDLITMMIDAKLATSRSDARRNIEQGGVSVNDVKVTDFARKFKSNDFNDDGALLVKKGKKAYHLFRAE</sequence>
<keyword id="KW-0030">Aminoacyl-tRNA synthetase</keyword>
<keyword id="KW-0067">ATP-binding</keyword>
<keyword id="KW-0963">Cytoplasm</keyword>
<keyword id="KW-0436">Ligase</keyword>
<keyword id="KW-0547">Nucleotide-binding</keyword>
<keyword id="KW-0648">Protein biosynthesis</keyword>
<keyword id="KW-1185">Reference proteome</keyword>
<keyword id="KW-0694">RNA-binding</keyword>
<protein>
    <recommendedName>
        <fullName evidence="1">Tyrosine--tRNA ligase</fullName>
        <ecNumber evidence="1">6.1.1.1</ecNumber>
    </recommendedName>
    <alternativeName>
        <fullName evidence="1">Tyrosyl-tRNA synthetase</fullName>
        <shortName evidence="1">TyrRS</shortName>
    </alternativeName>
</protein>
<comment type="function">
    <text evidence="1">Catalyzes the attachment of tyrosine to tRNA(Tyr) in a two-step reaction: tyrosine is first activated by ATP to form Tyr-AMP and then transferred to the acceptor end of tRNA(Tyr).</text>
</comment>
<comment type="catalytic activity">
    <reaction evidence="1">
        <text>tRNA(Tyr) + L-tyrosine + ATP = L-tyrosyl-tRNA(Tyr) + AMP + diphosphate + H(+)</text>
        <dbReference type="Rhea" id="RHEA:10220"/>
        <dbReference type="Rhea" id="RHEA-COMP:9706"/>
        <dbReference type="Rhea" id="RHEA-COMP:9707"/>
        <dbReference type="ChEBI" id="CHEBI:15378"/>
        <dbReference type="ChEBI" id="CHEBI:30616"/>
        <dbReference type="ChEBI" id="CHEBI:33019"/>
        <dbReference type="ChEBI" id="CHEBI:58315"/>
        <dbReference type="ChEBI" id="CHEBI:78442"/>
        <dbReference type="ChEBI" id="CHEBI:78536"/>
        <dbReference type="ChEBI" id="CHEBI:456215"/>
        <dbReference type="EC" id="6.1.1.1"/>
    </reaction>
</comment>
<comment type="subunit">
    <text evidence="1">Homodimer.</text>
</comment>
<comment type="subcellular location">
    <subcellularLocation>
        <location evidence="1">Cytoplasm</location>
    </subcellularLocation>
</comment>
<comment type="similarity">
    <text evidence="1">Belongs to the class-I aminoacyl-tRNA synthetase family. TyrS type 1 subfamily.</text>
</comment>
<evidence type="ECO:0000255" key="1">
    <source>
        <dbReference type="HAMAP-Rule" id="MF_02006"/>
    </source>
</evidence>
<reference key="1">
    <citation type="submission" date="2007-11" db="EMBL/GenBank/DDBJ databases">
        <title>Complete genome sequence of Clostridium phytofermentans ISDg.</title>
        <authorList>
            <person name="Leschine S.B."/>
            <person name="Warnick T.A."/>
            <person name="Blanchard J.L."/>
            <person name="Schnell D.J."/>
            <person name="Petit E.L."/>
            <person name="LaTouf W.G."/>
            <person name="Copeland A."/>
            <person name="Lucas S."/>
            <person name="Lapidus A."/>
            <person name="Barry K."/>
            <person name="Glavina del Rio T."/>
            <person name="Dalin E."/>
            <person name="Tice H."/>
            <person name="Pitluck S."/>
            <person name="Kiss H."/>
            <person name="Brettin T."/>
            <person name="Bruce D."/>
            <person name="Detter J.C."/>
            <person name="Han C."/>
            <person name="Kuske C."/>
            <person name="Schmutz J."/>
            <person name="Larimer F."/>
            <person name="Land M."/>
            <person name="Hauser L."/>
            <person name="Kyrpides N."/>
            <person name="Kim E.A."/>
            <person name="Richardson P."/>
        </authorList>
    </citation>
    <scope>NUCLEOTIDE SEQUENCE [LARGE SCALE GENOMIC DNA]</scope>
    <source>
        <strain>ATCC 700394 / DSM 18823 / ISDg</strain>
    </source>
</reference>
<organism>
    <name type="scientific">Lachnoclostridium phytofermentans (strain ATCC 700394 / DSM 18823 / ISDg)</name>
    <name type="common">Clostridium phytofermentans</name>
    <dbReference type="NCBI Taxonomy" id="357809"/>
    <lineage>
        <taxon>Bacteria</taxon>
        <taxon>Bacillati</taxon>
        <taxon>Bacillota</taxon>
        <taxon>Clostridia</taxon>
        <taxon>Lachnospirales</taxon>
        <taxon>Lachnospiraceae</taxon>
    </lineage>
</organism>